<comment type="function">
    <text evidence="1">Exhibits S-adenosyl-L-methionine-dependent methyltransferase activity.</text>
</comment>
<comment type="similarity">
    <text evidence="2">Belongs to the UPF0677 family.</text>
</comment>
<proteinExistence type="inferred from homology"/>
<reference key="1">
    <citation type="submission" date="2006-10" db="EMBL/GenBank/DDBJ databases">
        <authorList>
            <person name="Fleischmann R.D."/>
            <person name="Dodson R.J."/>
            <person name="Haft D.H."/>
            <person name="Merkel J.S."/>
            <person name="Nelson W.C."/>
            <person name="Fraser C.M."/>
        </authorList>
    </citation>
    <scope>NUCLEOTIDE SEQUENCE [LARGE SCALE GENOMIC DNA]</scope>
    <source>
        <strain>104</strain>
    </source>
</reference>
<dbReference type="EC" id="2.1.1.-"/>
<dbReference type="EMBL" id="CP000479">
    <property type="protein sequence ID" value="ABK65850.1"/>
    <property type="molecule type" value="Genomic_DNA"/>
</dbReference>
<dbReference type="RefSeq" id="WP_011723470.1">
    <property type="nucleotide sequence ID" value="NC_008595.1"/>
</dbReference>
<dbReference type="SMR" id="A0Q9K2"/>
<dbReference type="KEGG" id="mav:MAV_0301"/>
<dbReference type="HOGENOM" id="CLU_056160_2_1_11"/>
<dbReference type="Proteomes" id="UP000001574">
    <property type="component" value="Chromosome"/>
</dbReference>
<dbReference type="GO" id="GO:0008168">
    <property type="term" value="F:methyltransferase activity"/>
    <property type="evidence" value="ECO:0007669"/>
    <property type="project" value="UniProtKB-KW"/>
</dbReference>
<dbReference type="GO" id="GO:0032259">
    <property type="term" value="P:methylation"/>
    <property type="evidence" value="ECO:0007669"/>
    <property type="project" value="UniProtKB-KW"/>
</dbReference>
<dbReference type="FunFam" id="3.40.50.150:FF:000152">
    <property type="entry name" value="S-adenosyl-L-methionine-dependent methyltransferase"/>
    <property type="match status" value="1"/>
</dbReference>
<dbReference type="Gene3D" id="3.40.50.150">
    <property type="entry name" value="Vaccinia Virus protein VP39"/>
    <property type="match status" value="1"/>
</dbReference>
<dbReference type="InterPro" id="IPR007213">
    <property type="entry name" value="Ppm1/Ppm2/Tcmp"/>
</dbReference>
<dbReference type="InterPro" id="IPR029063">
    <property type="entry name" value="SAM-dependent_MTases_sf"/>
</dbReference>
<dbReference type="InterPro" id="IPR011610">
    <property type="entry name" value="SAM_mthyl_Trfase_ML2640-like"/>
</dbReference>
<dbReference type="NCBIfam" id="TIGR00027">
    <property type="entry name" value="mthyl_TIGR00027"/>
    <property type="match status" value="1"/>
</dbReference>
<dbReference type="PANTHER" id="PTHR43619">
    <property type="entry name" value="S-ADENOSYL-L-METHIONINE-DEPENDENT METHYLTRANSFERASE YKTD-RELATED"/>
    <property type="match status" value="1"/>
</dbReference>
<dbReference type="PANTHER" id="PTHR43619:SF2">
    <property type="entry name" value="S-ADENOSYL-L-METHIONINE-DEPENDENT METHYLTRANSFERASES SUPERFAMILY PROTEIN"/>
    <property type="match status" value="1"/>
</dbReference>
<dbReference type="Pfam" id="PF04072">
    <property type="entry name" value="LCM"/>
    <property type="match status" value="1"/>
</dbReference>
<dbReference type="SUPFAM" id="SSF53335">
    <property type="entry name" value="S-adenosyl-L-methionine-dependent methyltransferases"/>
    <property type="match status" value="1"/>
</dbReference>
<name>Y301_MYCA1</name>
<keyword id="KW-0489">Methyltransferase</keyword>
<keyword id="KW-0949">S-adenosyl-L-methionine</keyword>
<keyword id="KW-0808">Transferase</keyword>
<gene>
    <name type="ordered locus">MAV_0301</name>
</gene>
<organism>
    <name type="scientific">Mycobacterium avium (strain 104)</name>
    <dbReference type="NCBI Taxonomy" id="243243"/>
    <lineage>
        <taxon>Bacteria</taxon>
        <taxon>Bacillati</taxon>
        <taxon>Actinomycetota</taxon>
        <taxon>Actinomycetes</taxon>
        <taxon>Mycobacteriales</taxon>
        <taxon>Mycobacteriaceae</taxon>
        <taxon>Mycobacterium</taxon>
        <taxon>Mycobacterium avium complex (MAC)</taxon>
    </lineage>
</organism>
<sequence length="314" mass="34846">MPRTDNDSWDITQSVGATALGVAAARAAETESENPLISDPFARIFVDAAGKGMWSIYADPALLTKADDLEPDLRGRLQLMIDFMATRTAFFDEFFLAAADAGVRQVVILAAGLDARSWRLPWPDGTVVYELDQPKVLDFKSTTLREHGAQPKAELVNVPIDLRQDWPKALQEAGFDASRPAVWSAEGLVRYLPAQAQDLLFERIDALSVPGSRLASNVPDSGFTDPDRLARQREDMRRMRAAAAKLVDAEITDFDDLWYPEERTPVDSWLRERGWDVSTATFAELMARYGRSIPQGAQDSMPPTLYVSAQRRAG</sequence>
<feature type="chain" id="PRO_0000361105" description="Putative S-adenosyl-L-methionine-dependent methyltransferase MAV_0301">
    <location>
        <begin position="1"/>
        <end position="314"/>
    </location>
</feature>
<feature type="binding site" evidence="1">
    <location>
        <position position="132"/>
    </location>
    <ligand>
        <name>S-adenosyl-L-methionine</name>
        <dbReference type="ChEBI" id="CHEBI:59789"/>
    </ligand>
</feature>
<feature type="binding site" evidence="1">
    <location>
        <begin position="161"/>
        <end position="162"/>
    </location>
    <ligand>
        <name>S-adenosyl-L-methionine</name>
        <dbReference type="ChEBI" id="CHEBI:59789"/>
    </ligand>
</feature>
<evidence type="ECO:0000250" key="1"/>
<evidence type="ECO:0000305" key="2"/>
<accession>A0Q9K2</accession>
<protein>
    <recommendedName>
        <fullName>Putative S-adenosyl-L-methionine-dependent methyltransferase MAV_0301</fullName>
        <ecNumber>2.1.1.-</ecNumber>
    </recommendedName>
</protein>